<sequence length="229" mass="26639">MRFIIAFLMILNQGFSNLFSLPPEDIIFESSYEVAIKKAQKLNKNVLILVGRDIKENLIKDFLNSFTNGEIIHKVSRKSVFLVIDKDNEIFNKINLQKSPTIFFVDSKNEQIKAAYVGAVLSSVQFDKDFLNYVMGAIKSTSVLKKQKDYEINTADERTFFYKTLKGDWRLKFNGKDRKLVLFDTDLKEFLVFKDINENKLYAIPKSRIGNIYFSLLGNEEWKLFGKIK</sequence>
<gene>
    <name type="ordered locus">BB_0066</name>
</gene>
<protein>
    <recommendedName>
        <fullName>Uncharacterized protein BB_0066</fullName>
    </recommendedName>
</protein>
<feature type="chain" id="PRO_0000174378" description="Uncharacterized protein BB_0066">
    <location>
        <begin position="1"/>
        <end position="229"/>
    </location>
</feature>
<organism>
    <name type="scientific">Borreliella burgdorferi (strain ATCC 35210 / DSM 4680 / CIP 102532 / B31)</name>
    <name type="common">Borrelia burgdorferi</name>
    <dbReference type="NCBI Taxonomy" id="224326"/>
    <lineage>
        <taxon>Bacteria</taxon>
        <taxon>Pseudomonadati</taxon>
        <taxon>Spirochaetota</taxon>
        <taxon>Spirochaetia</taxon>
        <taxon>Spirochaetales</taxon>
        <taxon>Borreliaceae</taxon>
        <taxon>Borreliella</taxon>
    </lineage>
</organism>
<keyword id="KW-1185">Reference proteome</keyword>
<reference key="1">
    <citation type="journal article" date="1997" name="Nature">
        <title>Genomic sequence of a Lyme disease spirochaete, Borrelia burgdorferi.</title>
        <authorList>
            <person name="Fraser C.M."/>
            <person name="Casjens S."/>
            <person name="Huang W.M."/>
            <person name="Sutton G.G."/>
            <person name="Clayton R.A."/>
            <person name="Lathigra R."/>
            <person name="White O."/>
            <person name="Ketchum K.A."/>
            <person name="Dodson R.J."/>
            <person name="Hickey E.K."/>
            <person name="Gwinn M.L."/>
            <person name="Dougherty B.A."/>
            <person name="Tomb J.-F."/>
            <person name="Fleischmann R.D."/>
            <person name="Richardson D.L."/>
            <person name="Peterson J.D."/>
            <person name="Kerlavage A.R."/>
            <person name="Quackenbush J."/>
            <person name="Salzberg S.L."/>
            <person name="Hanson M."/>
            <person name="van Vugt R."/>
            <person name="Palmer N."/>
            <person name="Adams M.D."/>
            <person name="Gocayne J.D."/>
            <person name="Weidman J.F."/>
            <person name="Utterback T.R."/>
            <person name="Watthey L."/>
            <person name="McDonald L.A."/>
            <person name="Artiach P."/>
            <person name="Bowman C."/>
            <person name="Garland S.A."/>
            <person name="Fujii C."/>
            <person name="Cotton M.D."/>
            <person name="Horst K."/>
            <person name="Roberts K.M."/>
            <person name="Hatch B."/>
            <person name="Smith H.O."/>
            <person name="Venter J.C."/>
        </authorList>
    </citation>
    <scope>NUCLEOTIDE SEQUENCE [LARGE SCALE GENOMIC DNA]</scope>
    <source>
        <strain>ATCC 35210 / DSM 4680 / CIP 102532 / B31</strain>
    </source>
</reference>
<proteinExistence type="predicted"/>
<accession>O51093</accession>
<dbReference type="EMBL" id="AE000783">
    <property type="protein sequence ID" value="AAC66453.1"/>
    <property type="molecule type" value="Genomic_DNA"/>
</dbReference>
<dbReference type="PIR" id="B70108">
    <property type="entry name" value="B70108"/>
</dbReference>
<dbReference type="RefSeq" id="NP_212200.1">
    <property type="nucleotide sequence ID" value="NC_001318.1"/>
</dbReference>
<dbReference type="RefSeq" id="WP_010889674.1">
    <property type="nucleotide sequence ID" value="NC_001318.1"/>
</dbReference>
<dbReference type="SMR" id="O51093"/>
<dbReference type="STRING" id="224326.BB_0066"/>
<dbReference type="PaxDb" id="224326-BB_0066"/>
<dbReference type="EnsemblBacteria" id="AAC66453">
    <property type="protein sequence ID" value="AAC66453"/>
    <property type="gene ID" value="BB_0066"/>
</dbReference>
<dbReference type="KEGG" id="bbu:BB_0066"/>
<dbReference type="PATRIC" id="fig|224326.49.peg.464"/>
<dbReference type="HOGENOM" id="CLU_104514_0_0_12"/>
<dbReference type="OrthoDB" id="350403at2"/>
<dbReference type="Proteomes" id="UP000001807">
    <property type="component" value="Chromosome"/>
</dbReference>
<dbReference type="InterPro" id="IPR036249">
    <property type="entry name" value="Thioredoxin-like_sf"/>
</dbReference>
<dbReference type="SUPFAM" id="SSF52833">
    <property type="entry name" value="Thioredoxin-like"/>
    <property type="match status" value="1"/>
</dbReference>
<name>Y066_BORBU</name>